<evidence type="ECO:0000255" key="1">
    <source>
        <dbReference type="HAMAP-Rule" id="MF_00156"/>
    </source>
</evidence>
<evidence type="ECO:0000256" key="2">
    <source>
        <dbReference type="SAM" id="MobiDB-lite"/>
    </source>
</evidence>
<proteinExistence type="inferred from homology"/>
<dbReference type="EC" id="2.1.2.11" evidence="1"/>
<dbReference type="EMBL" id="CP000539">
    <property type="protein sequence ID" value="ABM43612.1"/>
    <property type="molecule type" value="Genomic_DNA"/>
</dbReference>
<dbReference type="SMR" id="A1WBI7"/>
<dbReference type="STRING" id="232721.Ajs_3499"/>
<dbReference type="KEGG" id="ajs:Ajs_3499"/>
<dbReference type="eggNOG" id="COG0413">
    <property type="taxonomic scope" value="Bacteria"/>
</dbReference>
<dbReference type="HOGENOM" id="CLU_036645_1_0_4"/>
<dbReference type="UniPathway" id="UPA00028">
    <property type="reaction ID" value="UER00003"/>
</dbReference>
<dbReference type="Proteomes" id="UP000000645">
    <property type="component" value="Chromosome"/>
</dbReference>
<dbReference type="GO" id="GO:0005737">
    <property type="term" value="C:cytoplasm"/>
    <property type="evidence" value="ECO:0007669"/>
    <property type="project" value="UniProtKB-SubCell"/>
</dbReference>
<dbReference type="GO" id="GO:0003864">
    <property type="term" value="F:3-methyl-2-oxobutanoate hydroxymethyltransferase activity"/>
    <property type="evidence" value="ECO:0007669"/>
    <property type="project" value="UniProtKB-UniRule"/>
</dbReference>
<dbReference type="GO" id="GO:0000287">
    <property type="term" value="F:magnesium ion binding"/>
    <property type="evidence" value="ECO:0007669"/>
    <property type="project" value="TreeGrafter"/>
</dbReference>
<dbReference type="GO" id="GO:0015940">
    <property type="term" value="P:pantothenate biosynthetic process"/>
    <property type="evidence" value="ECO:0007669"/>
    <property type="project" value="UniProtKB-UniRule"/>
</dbReference>
<dbReference type="CDD" id="cd06557">
    <property type="entry name" value="KPHMT-like"/>
    <property type="match status" value="1"/>
</dbReference>
<dbReference type="FunFam" id="3.20.20.60:FF:000003">
    <property type="entry name" value="3-methyl-2-oxobutanoate hydroxymethyltransferase"/>
    <property type="match status" value="1"/>
</dbReference>
<dbReference type="Gene3D" id="3.20.20.60">
    <property type="entry name" value="Phosphoenolpyruvate-binding domains"/>
    <property type="match status" value="1"/>
</dbReference>
<dbReference type="HAMAP" id="MF_00156">
    <property type="entry name" value="PanB"/>
    <property type="match status" value="1"/>
</dbReference>
<dbReference type="InterPro" id="IPR003700">
    <property type="entry name" value="Pantoate_hydroxy_MeTrfase"/>
</dbReference>
<dbReference type="InterPro" id="IPR015813">
    <property type="entry name" value="Pyrv/PenolPyrv_kinase-like_dom"/>
</dbReference>
<dbReference type="InterPro" id="IPR040442">
    <property type="entry name" value="Pyrv_kinase-like_dom_sf"/>
</dbReference>
<dbReference type="NCBIfam" id="TIGR00222">
    <property type="entry name" value="panB"/>
    <property type="match status" value="1"/>
</dbReference>
<dbReference type="NCBIfam" id="NF001452">
    <property type="entry name" value="PRK00311.1"/>
    <property type="match status" value="1"/>
</dbReference>
<dbReference type="PANTHER" id="PTHR20881">
    <property type="entry name" value="3-METHYL-2-OXOBUTANOATE HYDROXYMETHYLTRANSFERASE"/>
    <property type="match status" value="1"/>
</dbReference>
<dbReference type="PANTHER" id="PTHR20881:SF0">
    <property type="entry name" value="3-METHYL-2-OXOBUTANOATE HYDROXYMETHYLTRANSFERASE"/>
    <property type="match status" value="1"/>
</dbReference>
<dbReference type="Pfam" id="PF02548">
    <property type="entry name" value="Pantoate_transf"/>
    <property type="match status" value="1"/>
</dbReference>
<dbReference type="PIRSF" id="PIRSF000388">
    <property type="entry name" value="Pantoate_hydroxy_MeTrfase"/>
    <property type="match status" value="1"/>
</dbReference>
<dbReference type="SUPFAM" id="SSF51621">
    <property type="entry name" value="Phosphoenolpyruvate/pyruvate domain"/>
    <property type="match status" value="1"/>
</dbReference>
<reference key="1">
    <citation type="submission" date="2006-12" db="EMBL/GenBank/DDBJ databases">
        <title>Complete sequence of chromosome 1 of Acidovorax sp. JS42.</title>
        <authorList>
            <person name="Copeland A."/>
            <person name="Lucas S."/>
            <person name="Lapidus A."/>
            <person name="Barry K."/>
            <person name="Detter J.C."/>
            <person name="Glavina del Rio T."/>
            <person name="Dalin E."/>
            <person name="Tice H."/>
            <person name="Pitluck S."/>
            <person name="Chertkov O."/>
            <person name="Brettin T."/>
            <person name="Bruce D."/>
            <person name="Han C."/>
            <person name="Tapia R."/>
            <person name="Gilna P."/>
            <person name="Schmutz J."/>
            <person name="Larimer F."/>
            <person name="Land M."/>
            <person name="Hauser L."/>
            <person name="Kyrpides N."/>
            <person name="Kim E."/>
            <person name="Stahl D."/>
            <person name="Richardson P."/>
        </authorList>
    </citation>
    <scope>NUCLEOTIDE SEQUENCE [LARGE SCALE GENOMIC DNA]</scope>
    <source>
        <strain>JS42</strain>
    </source>
</reference>
<keyword id="KW-0963">Cytoplasm</keyword>
<keyword id="KW-0460">Magnesium</keyword>
<keyword id="KW-0479">Metal-binding</keyword>
<keyword id="KW-0566">Pantothenate biosynthesis</keyword>
<keyword id="KW-0808">Transferase</keyword>
<organism>
    <name type="scientific">Acidovorax sp. (strain JS42)</name>
    <dbReference type="NCBI Taxonomy" id="232721"/>
    <lineage>
        <taxon>Bacteria</taxon>
        <taxon>Pseudomonadati</taxon>
        <taxon>Pseudomonadota</taxon>
        <taxon>Betaproteobacteria</taxon>
        <taxon>Burkholderiales</taxon>
        <taxon>Comamonadaceae</taxon>
        <taxon>Acidovorax</taxon>
    </lineage>
</organism>
<feature type="chain" id="PRO_0000297207" description="3-methyl-2-oxobutanoate hydroxymethyltransferase">
    <location>
        <begin position="1"/>
        <end position="293"/>
    </location>
</feature>
<feature type="region of interest" description="Disordered" evidence="2">
    <location>
        <begin position="1"/>
        <end position="25"/>
    </location>
</feature>
<feature type="active site" description="Proton acceptor" evidence="1">
    <location>
        <position position="208"/>
    </location>
</feature>
<feature type="binding site" evidence="1">
    <location>
        <begin position="67"/>
        <end position="68"/>
    </location>
    <ligand>
        <name>3-methyl-2-oxobutanoate</name>
        <dbReference type="ChEBI" id="CHEBI:11851"/>
    </ligand>
</feature>
<feature type="binding site" evidence="1">
    <location>
        <position position="67"/>
    </location>
    <ligand>
        <name>Mg(2+)</name>
        <dbReference type="ChEBI" id="CHEBI:18420"/>
    </ligand>
</feature>
<feature type="binding site" evidence="1">
    <location>
        <position position="110"/>
    </location>
    <ligand>
        <name>3-methyl-2-oxobutanoate</name>
        <dbReference type="ChEBI" id="CHEBI:11851"/>
    </ligand>
</feature>
<feature type="binding site" evidence="1">
    <location>
        <position position="110"/>
    </location>
    <ligand>
        <name>Mg(2+)</name>
        <dbReference type="ChEBI" id="CHEBI:18420"/>
    </ligand>
</feature>
<feature type="binding site" evidence="1">
    <location>
        <position position="139"/>
    </location>
    <ligand>
        <name>3-methyl-2-oxobutanoate</name>
        <dbReference type="ChEBI" id="CHEBI:11851"/>
    </ligand>
</feature>
<feature type="binding site" evidence="1">
    <location>
        <position position="141"/>
    </location>
    <ligand>
        <name>Mg(2+)</name>
        <dbReference type="ChEBI" id="CHEBI:18420"/>
    </ligand>
</feature>
<comment type="function">
    <text evidence="1">Catalyzes the reversible reaction in which hydroxymethyl group from 5,10-methylenetetrahydrofolate is transferred onto alpha-ketoisovalerate to form ketopantoate.</text>
</comment>
<comment type="catalytic activity">
    <reaction evidence="1">
        <text>3-methyl-2-oxobutanoate + (6R)-5,10-methylene-5,6,7,8-tetrahydrofolate + H2O = 2-dehydropantoate + (6S)-5,6,7,8-tetrahydrofolate</text>
        <dbReference type="Rhea" id="RHEA:11824"/>
        <dbReference type="ChEBI" id="CHEBI:11561"/>
        <dbReference type="ChEBI" id="CHEBI:11851"/>
        <dbReference type="ChEBI" id="CHEBI:15377"/>
        <dbReference type="ChEBI" id="CHEBI:15636"/>
        <dbReference type="ChEBI" id="CHEBI:57453"/>
        <dbReference type="EC" id="2.1.2.11"/>
    </reaction>
</comment>
<comment type="cofactor">
    <cofactor evidence="1">
        <name>Mg(2+)</name>
        <dbReference type="ChEBI" id="CHEBI:18420"/>
    </cofactor>
    <text evidence="1">Binds 1 Mg(2+) ion per subunit.</text>
</comment>
<comment type="pathway">
    <text evidence="1">Cofactor biosynthesis; (R)-pantothenate biosynthesis; (R)-pantoate from 3-methyl-2-oxobutanoate: step 1/2.</text>
</comment>
<comment type="subunit">
    <text evidence="1">Homodecamer; pentamer of dimers.</text>
</comment>
<comment type="subcellular location">
    <subcellularLocation>
        <location evidence="1">Cytoplasm</location>
    </subcellularLocation>
</comment>
<comment type="similarity">
    <text evidence="1">Belongs to the PanB family.</text>
</comment>
<name>PANB_ACISJ</name>
<sequence>MTDSPTAGTPYGTLPPASPLPQRRPVSLPRLAQMREAGEKITMLTAYDATFAAVADAAGVECILVGDSLGMVCQGLPSTVGVTLEHMAYHTASVARGLHRVQGTAWLIADLPYGSYAESREQALRSACQLMQAGAHMVKLEGGGWTAPTVQFLVERGVPVCAHLGLTPQTVHALGGYRVQGKGDQAAQQLRRQALELQDAGAAMLVLEMVPTPLARDLTQALPRCHTIGIGAGSGTAGQVLVMHDMLGINLGKNPKFVHDFMRDAGSVRGAIEAYVQAVKQGRFPDDALHAWN</sequence>
<gene>
    <name evidence="1" type="primary">panB</name>
    <name type="ordered locus">Ajs_3499</name>
</gene>
<accession>A1WBI7</accession>
<protein>
    <recommendedName>
        <fullName evidence="1">3-methyl-2-oxobutanoate hydroxymethyltransferase</fullName>
        <ecNumber evidence="1">2.1.2.11</ecNumber>
    </recommendedName>
    <alternativeName>
        <fullName evidence="1">Ketopantoate hydroxymethyltransferase</fullName>
        <shortName evidence="1">KPHMT</shortName>
    </alternativeName>
</protein>